<dbReference type="EMBL" id="M57288">
    <property type="protein sequence ID" value="AAA29391.1"/>
    <property type="molecule type" value="mRNA"/>
</dbReference>
<dbReference type="EMBL" id="J02835">
    <property type="protein sequence ID" value="AAA29390.1"/>
    <property type="molecule type" value="mRNA"/>
</dbReference>
<dbReference type="PIR" id="A31137">
    <property type="entry name" value="A31137"/>
</dbReference>
<dbReference type="PIR" id="S13442">
    <property type="entry name" value="S13442"/>
</dbReference>
<dbReference type="SMR" id="P12659"/>
<dbReference type="GO" id="GO:0046872">
    <property type="term" value="F:metal ion binding"/>
    <property type="evidence" value="ECO:0007669"/>
    <property type="project" value="UniProtKB-KW"/>
</dbReference>
<dbReference type="GO" id="GO:0016491">
    <property type="term" value="F:oxidoreductase activity"/>
    <property type="evidence" value="ECO:0007669"/>
    <property type="project" value="InterPro"/>
</dbReference>
<dbReference type="GO" id="GO:0005344">
    <property type="term" value="F:oxygen carrier activity"/>
    <property type="evidence" value="ECO:0007669"/>
    <property type="project" value="UniProtKB-KW"/>
</dbReference>
<dbReference type="Gene3D" id="1.10.1280.10">
    <property type="entry name" value="Di-copper center containing domain from catechol oxidase"/>
    <property type="match status" value="3"/>
</dbReference>
<dbReference type="Gene3D" id="2.60.310.10">
    <property type="entry name" value="Haemocyanin C-terminal domain"/>
    <property type="match status" value="3"/>
</dbReference>
<dbReference type="InterPro" id="IPR008922">
    <property type="entry name" value="Di-copper_centre_dom_sf"/>
</dbReference>
<dbReference type="InterPro" id="IPR028999">
    <property type="entry name" value="Haemocyanin_beta-sandwich"/>
</dbReference>
<dbReference type="InterPro" id="IPR036848">
    <property type="entry name" value="Haemocyanin_C_sf"/>
</dbReference>
<dbReference type="InterPro" id="IPR050316">
    <property type="entry name" value="Tyrosinase/Hemocyanin"/>
</dbReference>
<dbReference type="InterPro" id="IPR002227">
    <property type="entry name" value="Tyrosinase_Cu-bd"/>
</dbReference>
<dbReference type="PANTHER" id="PTHR11474">
    <property type="entry name" value="TYROSINASE FAMILY MEMBER"/>
    <property type="match status" value="1"/>
</dbReference>
<dbReference type="Pfam" id="PF14830">
    <property type="entry name" value="Haemocyan_bet_s"/>
    <property type="match status" value="3"/>
</dbReference>
<dbReference type="Pfam" id="PF00264">
    <property type="entry name" value="Tyrosinase"/>
    <property type="match status" value="3"/>
</dbReference>
<dbReference type="PRINTS" id="PR00092">
    <property type="entry name" value="TYROSINASE"/>
</dbReference>
<dbReference type="SUPFAM" id="SSF81277">
    <property type="entry name" value="C-terminal domain of mollusc hemocyanin"/>
    <property type="match status" value="3"/>
</dbReference>
<dbReference type="SUPFAM" id="SSF48056">
    <property type="entry name" value="Di-copper centre-containing domain"/>
    <property type="match status" value="3"/>
</dbReference>
<dbReference type="PROSITE" id="PS00497">
    <property type="entry name" value="TYROSINASE_1"/>
    <property type="match status" value="3"/>
</dbReference>
<dbReference type="PROSITE" id="PS00498">
    <property type="entry name" value="TYROSINASE_2"/>
    <property type="match status" value="3"/>
</dbReference>
<organism>
    <name type="scientific">Enteroctopus dofleini</name>
    <name type="common">North Pacific giant octopus</name>
    <name type="synonym">Octopus dofleini</name>
    <dbReference type="NCBI Taxonomy" id="267067"/>
    <lineage>
        <taxon>Eukaryota</taxon>
        <taxon>Metazoa</taxon>
        <taxon>Spiralia</taxon>
        <taxon>Lophotrochozoa</taxon>
        <taxon>Mollusca</taxon>
        <taxon>Cephalopoda</taxon>
        <taxon>Coleoidea</taxon>
        <taxon>Octopodiformes</taxon>
        <taxon>Octopoda</taxon>
        <taxon>Incirrata</taxon>
        <taxon>Octopodidae</taxon>
        <taxon>Enteroctopus</taxon>
    </lineage>
</organism>
<protein>
    <recommendedName>
        <fullName>Hemocyanin A-type, units Ode to Odg</fullName>
    </recommendedName>
</protein>
<sequence length="1233" mass="141524">EGNEYLVRKNVERLSLSEMNSLIHAFRRMQKDKSSDGFEAIASFHALPPLCPSPTAKHRHACCLHGMATFPHWHRLYVVQFEQALHRHGATVGVPYWDWTRPISKIPDFIASEKYSDPFTKIEVYNPFNHGHISFISEDTTTKREVSEYLFEHPVLGKQTWLFDNIALALEQTDYCDFEIQLEIVHNAIHSWIGGKEEHSLNHLHYAAYDPIFYLHHSNVDRLWVIWQELQKLRGLNAYESHCALELMKVPLKPFSFGAPYNLNDLTTKLSKPEDMFRYKDNFHYEYDILDINSMSINQIESSYIRHQKDHDRVFAGFLLSGFGSSAYATFEICIEGGECHEGSHFAVLGGSTEMPWAFDRLYKIEITDVLSDMHLAFDSAFTIKTKIVAQNGTELPASILPEATVIRIPPSKQDADIDIPLNHIRRNVESLDERDIQNLMAALTRVKKDESDHGFQTIASYHGSTLCPSPEEPKYACCLHGMPVFPHWHRVYLLHFEDSMRRHGSSVATPYWDWTQPGTKLPRLLADSDYYDAWTDNVTENPFLRGYITSEDTYTVRDVKPELFEIGGGEGSTLYQQVLLMLEQEDYCDFEVQFEVVHNSIHYLVGGHQKYAMSSLVYSSFDPIFYVHHSMVDRLWAIWQALQEHRHLPFDKAYCALEQLSFPMKPFVWESNPNLHTRAASTPQHLFDYNKLGYKYDDLEFHGMNIDQLENAIHKTQNKDRVFASFLLFGIKTSADVHLKLCKDETCEDAGVVFVLGGDNEMPWPFDRTYKMDITNVLHKMHIPLEDLYVHGSTIHLEVKIESVDGKVLDSSSLPVPSMIYVPAKEFTKEIEKEAVRGTIIRKNVNSLTPSDIKELRDAMAKVQADTSDNGYQKIASYHGIPLSCHYENGTAYACCQHGMVTFPNWHRLLTKQMEDALVAKGSHVGIPYWDWTTTFANLPVLVTEEKDNSFHHAHIDVANTDTTRSPRAQLFDDPEKGDKSFFYRQIALALEQTDFCDFEIQFEIGHNAIHSWVGGSSPYGMSTLHYTSYDPLFYLHHSNTDRIWSVWQALQKYRGLPYNTANCEINKLVKPLKPFNLDTNPNAVTKAHSTGATSFDYHKLGYDYDNLNFHGMTIPELEEHLKEIQHEDRVFAGFLLRTIGQSADVNFDVCTKDGECTFGGTFCILGGEHEMFWAFDRPFKYDITTSLKHLRLDAHDDFDIKVTIKGIDGHVLSNKYLSPPTVFLAPAKTTH</sequence>
<feature type="chain" id="PRO_0000204300" description="Hemocyanin A-type, units Ode to Odg">
    <location>
        <begin position="1" status="less than"/>
        <end position="1233"/>
    </location>
</feature>
<feature type="region of interest" description="ODD">
    <location>
        <begin position="1" status="less than"/>
        <end position="4"/>
    </location>
</feature>
<feature type="region of interest" description="ODE">
    <location>
        <begin position="5"/>
        <end position="422"/>
    </location>
</feature>
<feature type="region of interest" description="ODF">
    <location>
        <begin position="423"/>
        <end position="839"/>
    </location>
</feature>
<feature type="region of interest" description="ODG">
    <location>
        <begin position="840"/>
        <end position="1233"/>
    </location>
</feature>
<feature type="binding site" evidence="1">
    <location>
        <position position="45"/>
    </location>
    <ligand>
        <name>Cu cation</name>
        <dbReference type="ChEBI" id="CHEBI:23378"/>
        <label>A</label>
    </ligand>
</feature>
<feature type="binding site" evidence="1">
    <location>
        <position position="65"/>
    </location>
    <ligand>
        <name>Cu cation</name>
        <dbReference type="ChEBI" id="CHEBI:23378"/>
        <label>A</label>
    </ligand>
</feature>
<feature type="binding site" evidence="1">
    <location>
        <position position="74"/>
    </location>
    <ligand>
        <name>Cu cation</name>
        <dbReference type="ChEBI" id="CHEBI:23378"/>
        <label>A</label>
    </ligand>
</feature>
<feature type="binding site" evidence="1">
    <location>
        <position position="186"/>
    </location>
    <ligand>
        <name>Cu cation</name>
        <dbReference type="ChEBI" id="CHEBI:23378"/>
        <label>B</label>
    </ligand>
</feature>
<feature type="binding site" evidence="1">
    <location>
        <position position="190"/>
    </location>
    <ligand>
        <name>Cu cation</name>
        <dbReference type="ChEBI" id="CHEBI:23378"/>
        <label>B</label>
    </ligand>
</feature>
<feature type="binding site" evidence="1">
    <location>
        <position position="217"/>
    </location>
    <ligand>
        <name>Cu cation</name>
        <dbReference type="ChEBI" id="CHEBI:23378"/>
        <label>B</label>
    </ligand>
</feature>
<feature type="binding site" evidence="1">
    <location>
        <position position="463"/>
    </location>
    <ligand>
        <name>Cu cation</name>
        <dbReference type="ChEBI" id="CHEBI:23378"/>
        <label>A</label>
    </ligand>
</feature>
<feature type="binding site" evidence="1">
    <location>
        <position position="481"/>
    </location>
    <ligand>
        <name>Cu cation</name>
        <dbReference type="ChEBI" id="CHEBI:23378"/>
        <label>A</label>
    </ligand>
</feature>
<feature type="binding site" evidence="1">
    <location>
        <position position="490"/>
    </location>
    <ligand>
        <name>Cu cation</name>
        <dbReference type="ChEBI" id="CHEBI:23378"/>
        <label>A</label>
    </ligand>
</feature>
<feature type="binding site" evidence="1">
    <location>
        <position position="599"/>
    </location>
    <ligand>
        <name>Cu cation</name>
        <dbReference type="ChEBI" id="CHEBI:23378"/>
        <label>B</label>
    </ligand>
</feature>
<feature type="binding site" evidence="1">
    <location>
        <position position="603"/>
    </location>
    <ligand>
        <name>Cu cation</name>
        <dbReference type="ChEBI" id="CHEBI:23378"/>
        <label>B</label>
    </ligand>
</feature>
<feature type="binding site" evidence="1">
    <location>
        <position position="630"/>
    </location>
    <ligand>
        <name>Cu cation</name>
        <dbReference type="ChEBI" id="CHEBI:23378"/>
        <label>B</label>
    </ligand>
</feature>
<feature type="binding site" evidence="1">
    <location>
        <position position="880"/>
    </location>
    <ligand>
        <name>Cu cation</name>
        <dbReference type="ChEBI" id="CHEBI:23378"/>
        <label>A</label>
    </ligand>
</feature>
<feature type="binding site" evidence="1">
    <location>
        <position position="899"/>
    </location>
    <ligand>
        <name>Cu cation</name>
        <dbReference type="ChEBI" id="CHEBI:23378"/>
        <label>A</label>
    </ligand>
</feature>
<feature type="binding site" evidence="1">
    <location>
        <position position="908"/>
    </location>
    <ligand>
        <name>Cu cation</name>
        <dbReference type="ChEBI" id="CHEBI:23378"/>
        <label>A</label>
    </ligand>
</feature>
<feature type="binding site" evidence="1">
    <location>
        <position position="1008"/>
    </location>
    <ligand>
        <name>Cu cation</name>
        <dbReference type="ChEBI" id="CHEBI:23378"/>
        <label>B</label>
    </ligand>
</feature>
<feature type="binding site" evidence="1">
    <location>
        <position position="1012"/>
    </location>
    <ligand>
        <name>Cu cation</name>
        <dbReference type="ChEBI" id="CHEBI:23378"/>
        <label>B</label>
    </ligand>
</feature>
<feature type="binding site" evidence="1">
    <location>
        <position position="1039"/>
    </location>
    <ligand>
        <name>Cu cation</name>
        <dbReference type="ChEBI" id="CHEBI:23378"/>
        <label>B</label>
    </ligand>
</feature>
<feature type="glycosylation site" description="N-linked (GlcNAc...) asparagine" evidence="2">
    <location>
        <position position="392"/>
    </location>
</feature>
<feature type="glycosylation site" description="N-linked (GlcNAc...) asparagine" evidence="2">
    <location>
        <position position="538"/>
    </location>
</feature>
<feature type="glycosylation site" description="N-linked (GlcNAc...) asparagine" evidence="2">
    <location>
        <position position="890"/>
    </location>
</feature>
<feature type="disulfide bond" evidence="1">
    <location>
        <begin position="51"/>
        <end position="62"/>
    </location>
</feature>
<feature type="disulfide bond" evidence="1">
    <location>
        <begin position="176"/>
        <end position="243"/>
    </location>
</feature>
<feature type="disulfide bond" evidence="1">
    <location>
        <begin position="334"/>
        <end position="340"/>
    </location>
</feature>
<feature type="disulfide bond" evidence="1">
    <location>
        <begin position="468"/>
        <end position="478"/>
    </location>
</feature>
<feature type="disulfide bond" evidence="1">
    <location>
        <begin position="589"/>
        <end position="656"/>
    </location>
</feature>
<feature type="disulfide bond" evidence="1">
    <location>
        <begin position="743"/>
        <end position="748"/>
    </location>
</feature>
<feature type="disulfide bond" evidence="1">
    <location>
        <begin position="886"/>
        <end position="896"/>
    </location>
</feature>
<feature type="disulfide bond" evidence="1">
    <location>
        <begin position="998"/>
        <end position="1065"/>
    </location>
</feature>
<feature type="disulfide bond" evidence="1">
    <location>
        <begin position="1152"/>
        <end position="1158"/>
    </location>
</feature>
<feature type="cross-link" description="2'-(S-cysteinyl)-histidine (Cys-His)" evidence="1">
    <location>
        <begin position="63"/>
        <end position="65"/>
    </location>
</feature>
<feature type="cross-link" description="2'-(S-cysteinyl)-histidine (Cys-His)" evidence="1">
    <location>
        <begin position="479"/>
        <end position="481"/>
    </location>
</feature>
<feature type="cross-link" description="2'-(S-cysteinyl)-histidine (Cys-His)" evidence="1">
    <location>
        <begin position="897"/>
        <end position="899"/>
    </location>
</feature>
<feature type="non-terminal residue">
    <location>
        <position position="1"/>
    </location>
</feature>
<name>HCYA_ENTDO</name>
<comment type="function">
    <text>Hemocyanins are copper-containing oxygen carriers occurring freely dissolved in the hemolymph of many mollusks and arthropods.</text>
</comment>
<comment type="cofactor">
    <cofactor>
        <name>Cu(2+)</name>
        <dbReference type="ChEBI" id="CHEBI:29036"/>
    </cofactor>
    <text>Binds 2 copper ions per heterodimer.</text>
</comment>
<comment type="subunit">
    <text>Decamers of large identical subunits (350 kDa), each containing 7 globular oxygen-binding domains: ODA, ODB, ODC, ODD, ODE, ODF, and ODG.</text>
</comment>
<comment type="similarity">
    <text evidence="3">Belongs to the tyrosinase family. Hemocyanin subfamily.</text>
</comment>
<accession>P12659</accession>
<accession>Q25585</accession>
<evidence type="ECO:0000250" key="1"/>
<evidence type="ECO:0000255" key="2"/>
<evidence type="ECO:0000305" key="3"/>
<proteinExistence type="evidence at transcript level"/>
<reference key="1">
    <citation type="journal article" date="1991" name="Proc. Natl. Acad. Sci. U.S.A.">
        <title>Cloning and sequencing of Octopus dofleini hemocyanin cDNA: derived sequences of functional units Ode and Odf.</title>
        <authorList>
            <person name="Lang W.H."/>
            <person name="van Holde K.E."/>
        </authorList>
    </citation>
    <scope>NUCLEOTIDE SEQUENCE [MRNA] OF 1-834</scope>
</reference>
<reference key="2">
    <citation type="journal article" date="1988" name="Biochemistry">
        <title>cDNA cloning of the Octopus dofleini hemocyanin: sequence of the carboxyl-terminal domain.</title>
        <authorList>
            <person name="Lang W.H."/>
        </authorList>
    </citation>
    <scope>NUCLEOTIDE SEQUENCE [MRNA] OF 835-1233</scope>
</reference>
<keyword id="KW-0186">Copper</keyword>
<keyword id="KW-1015">Disulfide bond</keyword>
<keyword id="KW-0325">Glycoprotein</keyword>
<keyword id="KW-0479">Metal-binding</keyword>
<keyword id="KW-0561">Oxygen transport</keyword>
<keyword id="KW-0677">Repeat</keyword>
<keyword id="KW-0883">Thioether bond</keyword>
<keyword id="KW-0813">Transport</keyword>